<proteinExistence type="inferred from homology"/>
<evidence type="ECO:0000255" key="1">
    <source>
        <dbReference type="HAMAP-Rule" id="MF_00445"/>
    </source>
</evidence>
<dbReference type="EC" id="7.1.1.-" evidence="1"/>
<dbReference type="EMBL" id="CP001618">
    <property type="protein sequence ID" value="ACQ81460.1"/>
    <property type="molecule type" value="Genomic_DNA"/>
</dbReference>
<dbReference type="RefSeq" id="WP_015883698.1">
    <property type="nucleotide sequence ID" value="NC_012669.1"/>
</dbReference>
<dbReference type="SMR" id="C5C0R4"/>
<dbReference type="STRING" id="471853.Bcav_3216"/>
<dbReference type="KEGG" id="bcv:Bcav_3216"/>
<dbReference type="eggNOG" id="COG1007">
    <property type="taxonomic scope" value="Bacteria"/>
</dbReference>
<dbReference type="HOGENOM" id="CLU_007100_1_1_11"/>
<dbReference type="OrthoDB" id="9811718at2"/>
<dbReference type="Proteomes" id="UP000007962">
    <property type="component" value="Chromosome"/>
</dbReference>
<dbReference type="GO" id="GO:0005886">
    <property type="term" value="C:plasma membrane"/>
    <property type="evidence" value="ECO:0007669"/>
    <property type="project" value="UniProtKB-SubCell"/>
</dbReference>
<dbReference type="GO" id="GO:0008137">
    <property type="term" value="F:NADH dehydrogenase (ubiquinone) activity"/>
    <property type="evidence" value="ECO:0007669"/>
    <property type="project" value="InterPro"/>
</dbReference>
<dbReference type="GO" id="GO:0050136">
    <property type="term" value="F:NADH:ubiquinone reductase (non-electrogenic) activity"/>
    <property type="evidence" value="ECO:0007669"/>
    <property type="project" value="UniProtKB-UniRule"/>
</dbReference>
<dbReference type="GO" id="GO:0048038">
    <property type="term" value="F:quinone binding"/>
    <property type="evidence" value="ECO:0007669"/>
    <property type="project" value="UniProtKB-KW"/>
</dbReference>
<dbReference type="GO" id="GO:0042773">
    <property type="term" value="P:ATP synthesis coupled electron transport"/>
    <property type="evidence" value="ECO:0007669"/>
    <property type="project" value="InterPro"/>
</dbReference>
<dbReference type="HAMAP" id="MF_00445">
    <property type="entry name" value="NDH1_NuoN_1"/>
    <property type="match status" value="1"/>
</dbReference>
<dbReference type="InterPro" id="IPR010096">
    <property type="entry name" value="NADH-Q_OxRdtase_suN/2"/>
</dbReference>
<dbReference type="InterPro" id="IPR001750">
    <property type="entry name" value="ND/Mrp_TM"/>
</dbReference>
<dbReference type="NCBIfam" id="TIGR01770">
    <property type="entry name" value="NDH_I_N"/>
    <property type="match status" value="1"/>
</dbReference>
<dbReference type="NCBIfam" id="NF004441">
    <property type="entry name" value="PRK05777.1-4"/>
    <property type="match status" value="1"/>
</dbReference>
<dbReference type="PANTHER" id="PTHR22773">
    <property type="entry name" value="NADH DEHYDROGENASE"/>
    <property type="match status" value="1"/>
</dbReference>
<dbReference type="Pfam" id="PF00361">
    <property type="entry name" value="Proton_antipo_M"/>
    <property type="match status" value="1"/>
</dbReference>
<keyword id="KW-1003">Cell membrane</keyword>
<keyword id="KW-0472">Membrane</keyword>
<keyword id="KW-0520">NAD</keyword>
<keyword id="KW-0874">Quinone</keyword>
<keyword id="KW-1185">Reference proteome</keyword>
<keyword id="KW-1278">Translocase</keyword>
<keyword id="KW-0812">Transmembrane</keyword>
<keyword id="KW-1133">Transmembrane helix</keyword>
<keyword id="KW-0813">Transport</keyword>
<protein>
    <recommendedName>
        <fullName evidence="1">NADH-quinone oxidoreductase subunit N</fullName>
        <ecNumber evidence="1">7.1.1.-</ecNumber>
    </recommendedName>
    <alternativeName>
        <fullName evidence="1">NADH dehydrogenase I subunit N</fullName>
    </alternativeName>
    <alternativeName>
        <fullName evidence="1">NDH-1 subunit N</fullName>
    </alternativeName>
</protein>
<accession>C5C0R4</accession>
<name>NUON_BEUC1</name>
<feature type="chain" id="PRO_0000391111" description="NADH-quinone oxidoreductase subunit N">
    <location>
        <begin position="1"/>
        <end position="531"/>
    </location>
</feature>
<feature type="transmembrane region" description="Helical" evidence="1">
    <location>
        <begin position="13"/>
        <end position="33"/>
    </location>
</feature>
<feature type="transmembrane region" description="Helical" evidence="1">
    <location>
        <begin position="45"/>
        <end position="65"/>
    </location>
</feature>
<feature type="transmembrane region" description="Helical" evidence="1">
    <location>
        <begin position="85"/>
        <end position="105"/>
    </location>
</feature>
<feature type="transmembrane region" description="Helical" evidence="1">
    <location>
        <begin position="150"/>
        <end position="170"/>
    </location>
</feature>
<feature type="transmembrane region" description="Helical" evidence="1">
    <location>
        <begin position="200"/>
        <end position="220"/>
    </location>
</feature>
<feature type="transmembrane region" description="Helical" evidence="1">
    <location>
        <begin position="242"/>
        <end position="262"/>
    </location>
</feature>
<feature type="transmembrane region" description="Helical" evidence="1">
    <location>
        <begin position="289"/>
        <end position="309"/>
    </location>
</feature>
<feature type="transmembrane region" description="Helical" evidence="1">
    <location>
        <begin position="310"/>
        <end position="330"/>
    </location>
</feature>
<feature type="transmembrane region" description="Helical" evidence="1">
    <location>
        <begin position="339"/>
        <end position="359"/>
    </location>
</feature>
<feature type="transmembrane region" description="Helical" evidence="1">
    <location>
        <begin position="365"/>
        <end position="385"/>
    </location>
</feature>
<feature type="transmembrane region" description="Helical" evidence="1">
    <location>
        <begin position="415"/>
        <end position="435"/>
    </location>
</feature>
<feature type="transmembrane region" description="Helical" evidence="1">
    <location>
        <begin position="460"/>
        <end position="480"/>
    </location>
</feature>
<feature type="transmembrane region" description="Helical" evidence="1">
    <location>
        <begin position="496"/>
        <end position="516"/>
    </location>
</feature>
<sequence>MNFVQPVIQWASLAPILIVLGAAVLGVLIEAFAPRRVRRPVQVTLALLAAAGAFGAIAWRWAEVIGGGGGAPSTVVVGQLVEDGPALAAQGIIAILAFVGILVIAERGRRGAPGSEDAFAPQGASVPGSDYEDRARRAGLVQTEVYPLVLFSVGGMLVFPAAGDLLTLFIALEVLSLPLYLLSGLARRRRLLSQEASMKYFLLGAFSSALLLFGIALLYGYSGSVAIGEIHAATQATTGMDGLLVVGLVLLISGLLFKVGAVPFHAWTPDVYQGAPTPITGFMAACTKVAAFGALLRVVYVVAPAMTWDIQPFLWVVAVLTMVVGTVLAIVQTDMKRTLAYSSVAHAGFLLVGVVAMSPEGISSVFFYLLAYGLATIGAFALVALVRERDAEGNVTAEASHLAQWAGLGRRSPVVATVFALYLLSFAGIPLTSGFVGKFVAFAAAIDGGAWPLVVVGVLASAAAAFFYVRIIVLMFFTSPAEEAGAPSTTVVRSQGFTAVAVALTAAATLVLGVWPTPVLDLLAQATKFVV</sequence>
<reference key="1">
    <citation type="journal article" date="2009" name="Stand. Genomic Sci.">
        <title>Complete genome sequence of Beutenbergia cavernae type strain (HKI 0122).</title>
        <authorList>
            <person name="Land M."/>
            <person name="Pukall R."/>
            <person name="Abt B."/>
            <person name="Goker M."/>
            <person name="Rohde M."/>
            <person name="Glavina Del Rio T."/>
            <person name="Tice H."/>
            <person name="Copeland A."/>
            <person name="Cheng J.F."/>
            <person name="Lucas S."/>
            <person name="Chen F."/>
            <person name="Nolan M."/>
            <person name="Bruce D."/>
            <person name="Goodwin L."/>
            <person name="Pitluck S."/>
            <person name="Ivanova N."/>
            <person name="Mavromatis K."/>
            <person name="Ovchinnikova G."/>
            <person name="Pati A."/>
            <person name="Chen A."/>
            <person name="Palaniappan K."/>
            <person name="Hauser L."/>
            <person name="Chang Y.J."/>
            <person name="Jefferies C.C."/>
            <person name="Saunders E."/>
            <person name="Brettin T."/>
            <person name="Detter J.C."/>
            <person name="Han C."/>
            <person name="Chain P."/>
            <person name="Bristow J."/>
            <person name="Eisen J.A."/>
            <person name="Markowitz V."/>
            <person name="Hugenholtz P."/>
            <person name="Kyrpides N.C."/>
            <person name="Klenk H.P."/>
            <person name="Lapidus A."/>
        </authorList>
    </citation>
    <scope>NUCLEOTIDE SEQUENCE [LARGE SCALE GENOMIC DNA]</scope>
    <source>
        <strain>ATCC BAA-8 / DSM 12333 / CCUG 43141 / JCM 11478 / NBRC 16432 / NCIMB 13614 / HKI 0122</strain>
    </source>
</reference>
<organism>
    <name type="scientific">Beutenbergia cavernae (strain ATCC BAA-8 / DSM 12333 / CCUG 43141 / JCM 11478 / NBRC 16432 / NCIMB 13614 / HKI 0122)</name>
    <dbReference type="NCBI Taxonomy" id="471853"/>
    <lineage>
        <taxon>Bacteria</taxon>
        <taxon>Bacillati</taxon>
        <taxon>Actinomycetota</taxon>
        <taxon>Actinomycetes</taxon>
        <taxon>Micrococcales</taxon>
        <taxon>Beutenbergiaceae</taxon>
        <taxon>Beutenbergia</taxon>
    </lineage>
</organism>
<gene>
    <name evidence="1" type="primary">nuoN</name>
    <name type="ordered locus">Bcav_3216</name>
</gene>
<comment type="function">
    <text evidence="1">NDH-1 shuttles electrons from NADH, via FMN and iron-sulfur (Fe-S) centers, to quinones in the respiratory chain. The immediate electron acceptor for the enzyme in this species is believed to be a menaquinone. Couples the redox reaction to proton translocation (for every two electrons transferred, four hydrogen ions are translocated across the cytoplasmic membrane), and thus conserves the redox energy in a proton gradient.</text>
</comment>
<comment type="catalytic activity">
    <reaction evidence="1">
        <text>a quinone + NADH + 5 H(+)(in) = a quinol + NAD(+) + 4 H(+)(out)</text>
        <dbReference type="Rhea" id="RHEA:57888"/>
        <dbReference type="ChEBI" id="CHEBI:15378"/>
        <dbReference type="ChEBI" id="CHEBI:24646"/>
        <dbReference type="ChEBI" id="CHEBI:57540"/>
        <dbReference type="ChEBI" id="CHEBI:57945"/>
        <dbReference type="ChEBI" id="CHEBI:132124"/>
    </reaction>
</comment>
<comment type="subunit">
    <text evidence="1">NDH-1 is composed of 14 different subunits. Subunits NuoA, H, J, K, L, M, N constitute the membrane sector of the complex.</text>
</comment>
<comment type="subcellular location">
    <subcellularLocation>
        <location evidence="1">Cell membrane</location>
        <topology evidence="1">Multi-pass membrane protein</topology>
    </subcellularLocation>
</comment>
<comment type="similarity">
    <text evidence="1">Belongs to the complex I subunit 2 family.</text>
</comment>